<evidence type="ECO:0000255" key="1">
    <source>
        <dbReference type="HAMAP-Rule" id="MF_00367"/>
    </source>
</evidence>
<evidence type="ECO:0000255" key="2">
    <source>
        <dbReference type="PROSITE-ProRule" id="PRU01050"/>
    </source>
</evidence>
<gene>
    <name evidence="1" type="primary">era</name>
    <name type="ordered locus">PSEEN4289</name>
</gene>
<name>ERA_PSEE4</name>
<dbReference type="EMBL" id="CT573326">
    <property type="protein sequence ID" value="CAK16976.1"/>
    <property type="molecule type" value="Genomic_DNA"/>
</dbReference>
<dbReference type="RefSeq" id="WP_011535347.1">
    <property type="nucleotide sequence ID" value="NC_008027.1"/>
</dbReference>
<dbReference type="SMR" id="Q1I5V9"/>
<dbReference type="STRING" id="384676.PSEEN4289"/>
<dbReference type="GeneID" id="32807294"/>
<dbReference type="KEGG" id="pen:PSEEN4289"/>
<dbReference type="eggNOG" id="COG1159">
    <property type="taxonomic scope" value="Bacteria"/>
</dbReference>
<dbReference type="HOGENOM" id="CLU_038009_1_2_6"/>
<dbReference type="OrthoDB" id="9805918at2"/>
<dbReference type="Proteomes" id="UP000000658">
    <property type="component" value="Chromosome"/>
</dbReference>
<dbReference type="GO" id="GO:0005829">
    <property type="term" value="C:cytosol"/>
    <property type="evidence" value="ECO:0007669"/>
    <property type="project" value="TreeGrafter"/>
</dbReference>
<dbReference type="GO" id="GO:0005886">
    <property type="term" value="C:plasma membrane"/>
    <property type="evidence" value="ECO:0007669"/>
    <property type="project" value="UniProtKB-SubCell"/>
</dbReference>
<dbReference type="GO" id="GO:0005525">
    <property type="term" value="F:GTP binding"/>
    <property type="evidence" value="ECO:0007669"/>
    <property type="project" value="UniProtKB-UniRule"/>
</dbReference>
<dbReference type="GO" id="GO:0003924">
    <property type="term" value="F:GTPase activity"/>
    <property type="evidence" value="ECO:0007669"/>
    <property type="project" value="UniProtKB-UniRule"/>
</dbReference>
<dbReference type="GO" id="GO:0043024">
    <property type="term" value="F:ribosomal small subunit binding"/>
    <property type="evidence" value="ECO:0007669"/>
    <property type="project" value="TreeGrafter"/>
</dbReference>
<dbReference type="GO" id="GO:0070181">
    <property type="term" value="F:small ribosomal subunit rRNA binding"/>
    <property type="evidence" value="ECO:0007669"/>
    <property type="project" value="UniProtKB-UniRule"/>
</dbReference>
<dbReference type="GO" id="GO:0000028">
    <property type="term" value="P:ribosomal small subunit assembly"/>
    <property type="evidence" value="ECO:0007669"/>
    <property type="project" value="TreeGrafter"/>
</dbReference>
<dbReference type="CDD" id="cd04163">
    <property type="entry name" value="Era"/>
    <property type="match status" value="1"/>
</dbReference>
<dbReference type="CDD" id="cd22534">
    <property type="entry name" value="KH-II_Era"/>
    <property type="match status" value="1"/>
</dbReference>
<dbReference type="FunFam" id="3.30.300.20:FF:000003">
    <property type="entry name" value="GTPase Era"/>
    <property type="match status" value="1"/>
</dbReference>
<dbReference type="FunFam" id="3.40.50.300:FF:000094">
    <property type="entry name" value="GTPase Era"/>
    <property type="match status" value="1"/>
</dbReference>
<dbReference type="Gene3D" id="3.30.300.20">
    <property type="match status" value="1"/>
</dbReference>
<dbReference type="Gene3D" id="3.40.50.300">
    <property type="entry name" value="P-loop containing nucleotide triphosphate hydrolases"/>
    <property type="match status" value="1"/>
</dbReference>
<dbReference type="HAMAP" id="MF_00367">
    <property type="entry name" value="GTPase_Era"/>
    <property type="match status" value="1"/>
</dbReference>
<dbReference type="InterPro" id="IPR030388">
    <property type="entry name" value="G_ERA_dom"/>
</dbReference>
<dbReference type="InterPro" id="IPR006073">
    <property type="entry name" value="GTP-bd"/>
</dbReference>
<dbReference type="InterPro" id="IPR005662">
    <property type="entry name" value="GTPase_Era-like"/>
</dbReference>
<dbReference type="InterPro" id="IPR015946">
    <property type="entry name" value="KH_dom-like_a/b"/>
</dbReference>
<dbReference type="InterPro" id="IPR004044">
    <property type="entry name" value="KH_dom_type_2"/>
</dbReference>
<dbReference type="InterPro" id="IPR009019">
    <property type="entry name" value="KH_sf_prok-type"/>
</dbReference>
<dbReference type="InterPro" id="IPR027417">
    <property type="entry name" value="P-loop_NTPase"/>
</dbReference>
<dbReference type="InterPro" id="IPR005225">
    <property type="entry name" value="Small_GTP-bd"/>
</dbReference>
<dbReference type="NCBIfam" id="TIGR00436">
    <property type="entry name" value="era"/>
    <property type="match status" value="1"/>
</dbReference>
<dbReference type="NCBIfam" id="NF000908">
    <property type="entry name" value="PRK00089.1"/>
    <property type="match status" value="1"/>
</dbReference>
<dbReference type="NCBIfam" id="TIGR00231">
    <property type="entry name" value="small_GTP"/>
    <property type="match status" value="1"/>
</dbReference>
<dbReference type="PANTHER" id="PTHR42698">
    <property type="entry name" value="GTPASE ERA"/>
    <property type="match status" value="1"/>
</dbReference>
<dbReference type="PANTHER" id="PTHR42698:SF1">
    <property type="entry name" value="GTPASE ERA, MITOCHONDRIAL"/>
    <property type="match status" value="1"/>
</dbReference>
<dbReference type="Pfam" id="PF07650">
    <property type="entry name" value="KH_2"/>
    <property type="match status" value="1"/>
</dbReference>
<dbReference type="Pfam" id="PF01926">
    <property type="entry name" value="MMR_HSR1"/>
    <property type="match status" value="1"/>
</dbReference>
<dbReference type="PRINTS" id="PR00326">
    <property type="entry name" value="GTP1OBG"/>
</dbReference>
<dbReference type="SUPFAM" id="SSF52540">
    <property type="entry name" value="P-loop containing nucleoside triphosphate hydrolases"/>
    <property type="match status" value="1"/>
</dbReference>
<dbReference type="SUPFAM" id="SSF54814">
    <property type="entry name" value="Prokaryotic type KH domain (KH-domain type II)"/>
    <property type="match status" value="1"/>
</dbReference>
<dbReference type="PROSITE" id="PS51713">
    <property type="entry name" value="G_ERA"/>
    <property type="match status" value="1"/>
</dbReference>
<dbReference type="PROSITE" id="PS50823">
    <property type="entry name" value="KH_TYPE_2"/>
    <property type="match status" value="1"/>
</dbReference>
<protein>
    <recommendedName>
        <fullName evidence="1">GTPase Era</fullName>
    </recommendedName>
</protein>
<keyword id="KW-0997">Cell inner membrane</keyword>
<keyword id="KW-1003">Cell membrane</keyword>
<keyword id="KW-0963">Cytoplasm</keyword>
<keyword id="KW-0342">GTP-binding</keyword>
<keyword id="KW-0472">Membrane</keyword>
<keyword id="KW-0547">Nucleotide-binding</keyword>
<keyword id="KW-0690">Ribosome biogenesis</keyword>
<keyword id="KW-0694">RNA-binding</keyword>
<keyword id="KW-0699">rRNA-binding</keyword>
<feature type="chain" id="PRO_1000079720" description="GTPase Era">
    <location>
        <begin position="1"/>
        <end position="300"/>
    </location>
</feature>
<feature type="domain" description="Era-type G" evidence="2">
    <location>
        <begin position="8"/>
        <end position="176"/>
    </location>
</feature>
<feature type="domain" description="KH type-2" evidence="1">
    <location>
        <begin position="199"/>
        <end position="283"/>
    </location>
</feature>
<feature type="region of interest" description="G1" evidence="2">
    <location>
        <begin position="16"/>
        <end position="23"/>
    </location>
</feature>
<feature type="region of interest" description="G2" evidence="2">
    <location>
        <begin position="42"/>
        <end position="46"/>
    </location>
</feature>
<feature type="region of interest" description="G3" evidence="2">
    <location>
        <begin position="63"/>
        <end position="66"/>
    </location>
</feature>
<feature type="region of interest" description="G4" evidence="2">
    <location>
        <begin position="125"/>
        <end position="128"/>
    </location>
</feature>
<feature type="region of interest" description="G5" evidence="2">
    <location>
        <begin position="155"/>
        <end position="157"/>
    </location>
</feature>
<feature type="binding site" evidence="1">
    <location>
        <begin position="16"/>
        <end position="23"/>
    </location>
    <ligand>
        <name>GTP</name>
        <dbReference type="ChEBI" id="CHEBI:37565"/>
    </ligand>
</feature>
<feature type="binding site" evidence="1">
    <location>
        <begin position="63"/>
        <end position="67"/>
    </location>
    <ligand>
        <name>GTP</name>
        <dbReference type="ChEBI" id="CHEBI:37565"/>
    </ligand>
</feature>
<feature type="binding site" evidence="1">
    <location>
        <begin position="125"/>
        <end position="128"/>
    </location>
    <ligand>
        <name>GTP</name>
        <dbReference type="ChEBI" id="CHEBI:37565"/>
    </ligand>
</feature>
<proteinExistence type="inferred from homology"/>
<comment type="function">
    <text evidence="1">An essential GTPase that binds both GDP and GTP, with rapid nucleotide exchange. Plays a role in 16S rRNA processing and 30S ribosomal subunit biogenesis and possibly also in cell cycle regulation and energy metabolism.</text>
</comment>
<comment type="subunit">
    <text evidence="1">Monomer.</text>
</comment>
<comment type="subcellular location">
    <subcellularLocation>
        <location>Cytoplasm</location>
    </subcellularLocation>
    <subcellularLocation>
        <location evidence="1">Cell inner membrane</location>
        <topology evidence="1">Peripheral membrane protein</topology>
    </subcellularLocation>
</comment>
<comment type="similarity">
    <text evidence="1 2">Belongs to the TRAFAC class TrmE-Era-EngA-EngB-Septin-like GTPase superfamily. Era GTPase family.</text>
</comment>
<reference key="1">
    <citation type="journal article" date="2006" name="Nat. Biotechnol.">
        <title>Complete genome sequence of the entomopathogenic and metabolically versatile soil bacterium Pseudomonas entomophila.</title>
        <authorList>
            <person name="Vodovar N."/>
            <person name="Vallenet D."/>
            <person name="Cruveiller S."/>
            <person name="Rouy Z."/>
            <person name="Barbe V."/>
            <person name="Acosta C."/>
            <person name="Cattolico L."/>
            <person name="Jubin C."/>
            <person name="Lajus A."/>
            <person name="Segurens B."/>
            <person name="Vacherie B."/>
            <person name="Wincker P."/>
            <person name="Weissenbach J."/>
            <person name="Lemaitre B."/>
            <person name="Medigue C."/>
            <person name="Boccard F."/>
        </authorList>
    </citation>
    <scope>NUCLEOTIDE SEQUENCE [LARGE SCALE GENOMIC DNA]</scope>
    <source>
        <strain>L48</strain>
    </source>
</reference>
<organism>
    <name type="scientific">Pseudomonas entomophila (strain L48)</name>
    <dbReference type="NCBI Taxonomy" id="384676"/>
    <lineage>
        <taxon>Bacteria</taxon>
        <taxon>Pseudomonadati</taxon>
        <taxon>Pseudomonadota</taxon>
        <taxon>Gammaproteobacteria</taxon>
        <taxon>Pseudomonadales</taxon>
        <taxon>Pseudomonadaceae</taxon>
        <taxon>Pseudomonas</taxon>
    </lineage>
</organism>
<accession>Q1I5V9</accession>
<sequence>MTENTSTRCGYVAIVGRPNVGKSTLLNHILGQKLAITSRKPQTTRHNMLGIKTEGDVQAIYVDTPGMHKANDKALNRYMNRNASAALKDVDVVIFVVDRTRWTDEDQLVLERVQYVTGPLIIAVNKTDRMEEKAELIPHLQWLQEQLPNAEVMPISAQQGHNLDALEAQIAKHLPENDHFFPEDQITDRSSRFLAAELVREKIMRQLGAELPYQITVEIEEFKQQGHVLHIHALILVERDGQKKIIIGDKGERIKRIGSEARKDMEVLFDSKVMLNLWVKVKGGWSDDERALRSLGYGDL</sequence>